<sequence length="449" mass="49937">MRECISIHVGQAGVQIGNACWELYCLEHGIQPDGQMPSDKTIGGGDDSFNTFFSETGAGKHVPRAVFVDLEPTVIDEVRTGTYRQLFHPEQLITGKEDAANNYARGHYTIGKEIIDLVLDRIRKLADQCTGLQGFLVFHSFGGGTGSGFTSLLMERLSVDYGKKSKLEFSIYPAPQVSTAVVEPYNSILTTHTTLEHSDCAFMVDNEAIYDICRRNLDIERPTYTNLNRLISQIVSSITASLRFDGALNVDLTEFQTNLVPYPRIHFPLATYAPVISAEKAYHEQLTVAEITNACFEPANQMVKCDPRHGKYMACCLLYRGDVVPKDVNAAIATIKTKRTIQFVDWCPTGFKVGINYQPPTVVPGGDLARVQRAVCMLSNTTAIAEAWARLDHKFDLMYAKRAFVHWYVGEGMEEGEFSEAREDMAALEKDYEEVGADSAEGDDEGEEY</sequence>
<dbReference type="EC" id="3.6.5.-" evidence="2"/>
<dbReference type="EMBL" id="BC078829">
    <property type="protein sequence ID" value="AAH78829.1"/>
    <property type="molecule type" value="mRNA"/>
</dbReference>
<dbReference type="RefSeq" id="NP_001011995.1">
    <property type="nucleotide sequence ID" value="NM_001011995.1"/>
</dbReference>
<dbReference type="RefSeq" id="XP_003749402.1">
    <property type="nucleotide sequence ID" value="XM_003749354.4"/>
</dbReference>
<dbReference type="SMR" id="Q6AYZ1"/>
<dbReference type="BioGRID" id="256494">
    <property type="interactions" value="3"/>
</dbReference>
<dbReference type="FunCoup" id="Q6AYZ1">
    <property type="interactions" value="1572"/>
</dbReference>
<dbReference type="IntAct" id="Q6AYZ1">
    <property type="interactions" value="1"/>
</dbReference>
<dbReference type="MINT" id="Q6AYZ1"/>
<dbReference type="STRING" id="10116.ENSRNOP00000068603"/>
<dbReference type="iPTMnet" id="Q6AYZ1"/>
<dbReference type="PhosphoSitePlus" id="Q6AYZ1"/>
<dbReference type="jPOST" id="Q6AYZ1"/>
<dbReference type="PaxDb" id="10116-ENSRNOP00000020932"/>
<dbReference type="Ensembl" id="ENSRNOT00000033450.4">
    <property type="protein sequence ID" value="ENSRNOP00000068603.1"/>
    <property type="gene ID" value="ENSRNOG00000021438.4"/>
</dbReference>
<dbReference type="GeneID" id="300218"/>
<dbReference type="KEGG" id="rno:300218"/>
<dbReference type="UCSC" id="RGD:1307226">
    <property type="organism name" value="rat"/>
</dbReference>
<dbReference type="AGR" id="RGD:1307226"/>
<dbReference type="CTD" id="84790"/>
<dbReference type="RGD" id="1307226">
    <property type="gene designation" value="Tuba1c"/>
</dbReference>
<dbReference type="eggNOG" id="KOG1376">
    <property type="taxonomic scope" value="Eukaryota"/>
</dbReference>
<dbReference type="GeneTree" id="ENSGT00950000182825"/>
<dbReference type="HOGENOM" id="CLU_015718_0_0_1"/>
<dbReference type="InParanoid" id="Q6AYZ1"/>
<dbReference type="OMA" id="PEGTHIN"/>
<dbReference type="OrthoDB" id="1844at2759"/>
<dbReference type="PhylomeDB" id="Q6AYZ1"/>
<dbReference type="TreeFam" id="TF300314"/>
<dbReference type="Reactome" id="R-RNO-190840">
    <property type="pathway name" value="Microtubule-dependent trafficking of connexons from Golgi to the plasma membrane"/>
</dbReference>
<dbReference type="Reactome" id="R-RNO-2132295">
    <property type="pathway name" value="MHC class II antigen presentation"/>
</dbReference>
<dbReference type="Reactome" id="R-RNO-2467813">
    <property type="pathway name" value="Separation of Sister Chromatids"/>
</dbReference>
<dbReference type="Reactome" id="R-RNO-2500257">
    <property type="pathway name" value="Resolution of Sister Chromatid Cohesion"/>
</dbReference>
<dbReference type="Reactome" id="R-RNO-3371497">
    <property type="pathway name" value="HSP90 chaperone cycle for steroid hormone receptors (SHR) in the presence of ligand"/>
</dbReference>
<dbReference type="Reactome" id="R-RNO-380320">
    <property type="pathway name" value="Recruitment of NuMA to mitotic centrosomes"/>
</dbReference>
<dbReference type="Reactome" id="R-RNO-437239">
    <property type="pathway name" value="Recycling pathway of L1"/>
</dbReference>
<dbReference type="Reactome" id="R-RNO-5610787">
    <property type="pathway name" value="Hedgehog 'off' state"/>
</dbReference>
<dbReference type="Reactome" id="R-RNO-5617833">
    <property type="pathway name" value="Cilium Assembly"/>
</dbReference>
<dbReference type="Reactome" id="R-RNO-5620924">
    <property type="pathway name" value="Intraflagellar transport"/>
</dbReference>
<dbReference type="Reactome" id="R-RNO-5626467">
    <property type="pathway name" value="RHO GTPases activate IQGAPs"/>
</dbReference>
<dbReference type="Reactome" id="R-RNO-5663220">
    <property type="pathway name" value="RHO GTPases Activate Formins"/>
</dbReference>
<dbReference type="Reactome" id="R-RNO-6807878">
    <property type="pathway name" value="COPI-mediated anterograde transport"/>
</dbReference>
<dbReference type="Reactome" id="R-RNO-6811434">
    <property type="pathway name" value="COPI-dependent Golgi-to-ER retrograde traffic"/>
</dbReference>
<dbReference type="Reactome" id="R-RNO-6811436">
    <property type="pathway name" value="COPI-independent Golgi-to-ER retrograde traffic"/>
</dbReference>
<dbReference type="Reactome" id="R-RNO-68877">
    <property type="pathway name" value="Mitotic Prometaphase"/>
</dbReference>
<dbReference type="Reactome" id="R-RNO-8852276">
    <property type="pathway name" value="The role of GTSE1 in G2/M progression after G2 checkpoint"/>
</dbReference>
<dbReference type="Reactome" id="R-RNO-8955332">
    <property type="pathway name" value="Carboxyterminal post-translational modifications of tubulin"/>
</dbReference>
<dbReference type="Reactome" id="R-RNO-9646399">
    <property type="pathway name" value="Aggrephagy"/>
</dbReference>
<dbReference type="Reactome" id="R-RNO-9648025">
    <property type="pathway name" value="EML4 and NUDC in mitotic spindle formation"/>
</dbReference>
<dbReference type="Reactome" id="R-RNO-9668328">
    <property type="pathway name" value="Sealing of the nuclear envelope (NE) by ESCRT-III"/>
</dbReference>
<dbReference type="Reactome" id="R-RNO-983189">
    <property type="pathway name" value="Kinesins"/>
</dbReference>
<dbReference type="Reactome" id="R-RNO-9833482">
    <property type="pathway name" value="PKR-mediated signaling"/>
</dbReference>
<dbReference type="PRO" id="PR:Q6AYZ1"/>
<dbReference type="Proteomes" id="UP000002494">
    <property type="component" value="Chromosome 7"/>
</dbReference>
<dbReference type="Bgee" id="ENSRNOG00000021438">
    <property type="expression patterns" value="Expressed in ovary and 19 other cell types or tissues"/>
</dbReference>
<dbReference type="GO" id="GO:0005737">
    <property type="term" value="C:cytoplasm"/>
    <property type="evidence" value="ECO:0000318"/>
    <property type="project" value="GO_Central"/>
</dbReference>
<dbReference type="GO" id="GO:0005881">
    <property type="term" value="C:cytoplasmic microtubule"/>
    <property type="evidence" value="ECO:0000266"/>
    <property type="project" value="RGD"/>
</dbReference>
<dbReference type="GO" id="GO:0045121">
    <property type="term" value="C:membrane raft"/>
    <property type="evidence" value="ECO:0000314"/>
    <property type="project" value="CAFA"/>
</dbReference>
<dbReference type="GO" id="GO:0005874">
    <property type="term" value="C:microtubule"/>
    <property type="evidence" value="ECO:0000318"/>
    <property type="project" value="GO_Central"/>
</dbReference>
<dbReference type="GO" id="GO:0005634">
    <property type="term" value="C:nucleus"/>
    <property type="evidence" value="ECO:0000266"/>
    <property type="project" value="RGD"/>
</dbReference>
<dbReference type="GO" id="GO:0005525">
    <property type="term" value="F:GTP binding"/>
    <property type="evidence" value="ECO:0000318"/>
    <property type="project" value="GO_Central"/>
</dbReference>
<dbReference type="GO" id="GO:0016787">
    <property type="term" value="F:hydrolase activity"/>
    <property type="evidence" value="ECO:0007669"/>
    <property type="project" value="UniProtKB-KW"/>
</dbReference>
<dbReference type="GO" id="GO:0046872">
    <property type="term" value="F:metal ion binding"/>
    <property type="evidence" value="ECO:0007669"/>
    <property type="project" value="UniProtKB-KW"/>
</dbReference>
<dbReference type="GO" id="GO:0005200">
    <property type="term" value="F:structural constituent of cytoskeleton"/>
    <property type="evidence" value="ECO:0000318"/>
    <property type="project" value="GO_Central"/>
</dbReference>
<dbReference type="GO" id="GO:0000226">
    <property type="term" value="P:microtubule cytoskeleton organization"/>
    <property type="evidence" value="ECO:0000318"/>
    <property type="project" value="GO_Central"/>
</dbReference>
<dbReference type="GO" id="GO:0000278">
    <property type="term" value="P:mitotic cell cycle"/>
    <property type="evidence" value="ECO:0000318"/>
    <property type="project" value="GO_Central"/>
</dbReference>
<dbReference type="CDD" id="cd02186">
    <property type="entry name" value="alpha_tubulin"/>
    <property type="match status" value="1"/>
</dbReference>
<dbReference type="FunFam" id="1.10.287.600:FF:000005">
    <property type="entry name" value="Tubulin alpha chain"/>
    <property type="match status" value="1"/>
</dbReference>
<dbReference type="FunFam" id="3.30.1330.20:FF:000001">
    <property type="entry name" value="Tubulin alpha chain"/>
    <property type="match status" value="1"/>
</dbReference>
<dbReference type="FunFam" id="3.40.50.1440:FF:000002">
    <property type="entry name" value="Tubulin alpha chain"/>
    <property type="match status" value="1"/>
</dbReference>
<dbReference type="Gene3D" id="1.10.287.600">
    <property type="entry name" value="Helix hairpin bin"/>
    <property type="match status" value="1"/>
</dbReference>
<dbReference type="Gene3D" id="3.30.1330.20">
    <property type="entry name" value="Tubulin/FtsZ, C-terminal domain"/>
    <property type="match status" value="1"/>
</dbReference>
<dbReference type="Gene3D" id="3.40.50.1440">
    <property type="entry name" value="Tubulin/FtsZ, GTPase domain"/>
    <property type="match status" value="1"/>
</dbReference>
<dbReference type="InterPro" id="IPR002452">
    <property type="entry name" value="Alpha_tubulin"/>
</dbReference>
<dbReference type="InterPro" id="IPR008280">
    <property type="entry name" value="Tub_FtsZ_C"/>
</dbReference>
<dbReference type="InterPro" id="IPR000217">
    <property type="entry name" value="Tubulin"/>
</dbReference>
<dbReference type="InterPro" id="IPR037103">
    <property type="entry name" value="Tubulin/FtsZ-like_C"/>
</dbReference>
<dbReference type="InterPro" id="IPR018316">
    <property type="entry name" value="Tubulin/FtsZ_2-layer-sand-dom"/>
</dbReference>
<dbReference type="InterPro" id="IPR036525">
    <property type="entry name" value="Tubulin/FtsZ_GTPase_sf"/>
</dbReference>
<dbReference type="InterPro" id="IPR023123">
    <property type="entry name" value="Tubulin_C"/>
</dbReference>
<dbReference type="InterPro" id="IPR017975">
    <property type="entry name" value="Tubulin_CS"/>
</dbReference>
<dbReference type="InterPro" id="IPR003008">
    <property type="entry name" value="Tubulin_FtsZ_GTPase"/>
</dbReference>
<dbReference type="PANTHER" id="PTHR11588">
    <property type="entry name" value="TUBULIN"/>
    <property type="match status" value="1"/>
</dbReference>
<dbReference type="Pfam" id="PF00091">
    <property type="entry name" value="Tubulin"/>
    <property type="match status" value="1"/>
</dbReference>
<dbReference type="Pfam" id="PF03953">
    <property type="entry name" value="Tubulin_C"/>
    <property type="match status" value="1"/>
</dbReference>
<dbReference type="PRINTS" id="PR01162">
    <property type="entry name" value="ALPHATUBULIN"/>
</dbReference>
<dbReference type="PRINTS" id="PR01161">
    <property type="entry name" value="TUBULIN"/>
</dbReference>
<dbReference type="SMART" id="SM00864">
    <property type="entry name" value="Tubulin"/>
    <property type="match status" value="1"/>
</dbReference>
<dbReference type="SMART" id="SM00865">
    <property type="entry name" value="Tubulin_C"/>
    <property type="match status" value="1"/>
</dbReference>
<dbReference type="SUPFAM" id="SSF55307">
    <property type="entry name" value="Tubulin C-terminal domain-like"/>
    <property type="match status" value="1"/>
</dbReference>
<dbReference type="SUPFAM" id="SSF52490">
    <property type="entry name" value="Tubulin nucleotide-binding domain-like"/>
    <property type="match status" value="1"/>
</dbReference>
<dbReference type="PROSITE" id="PS00227">
    <property type="entry name" value="TUBULIN"/>
    <property type="match status" value="1"/>
</dbReference>
<gene>
    <name type="primary">Tuba1c</name>
    <name type="synonym">Tuba6</name>
</gene>
<comment type="function">
    <text>Tubulin is the major constituent of microtubules, a cylinder consisting of laterally associated linear protofilaments composed of alpha- and beta-tubulin heterodimers. Microtubules grow by the addition of GTP-tubulin dimers to the microtubule end, where a stabilizing cap forms. Below the cap, tubulin dimers are in GDP-bound state, owing to GTPase activity of alpha-tubulin.</text>
</comment>
<comment type="catalytic activity">
    <reaction evidence="2">
        <text>GTP + H2O = GDP + phosphate + H(+)</text>
        <dbReference type="Rhea" id="RHEA:19669"/>
        <dbReference type="ChEBI" id="CHEBI:15377"/>
        <dbReference type="ChEBI" id="CHEBI:15378"/>
        <dbReference type="ChEBI" id="CHEBI:37565"/>
        <dbReference type="ChEBI" id="CHEBI:43474"/>
        <dbReference type="ChEBI" id="CHEBI:58189"/>
    </reaction>
    <physiologicalReaction direction="left-to-right" evidence="2">
        <dbReference type="Rhea" id="RHEA:19670"/>
    </physiologicalReaction>
</comment>
<comment type="cofactor">
    <cofactor evidence="2">
        <name>Mg(2+)</name>
        <dbReference type="ChEBI" id="CHEBI:18420"/>
    </cofactor>
</comment>
<comment type="subunit">
    <text>Dimer of alpha and beta chains. A typical microtubule is a hollow water-filled tube with an outer diameter of 25 nm and an inner diameter of 15 nM. Alpha-beta heterodimers associate head-to-tail to form protofilaments running lengthwise along the microtubule wall with the beta-tubulin subunit facing the microtubule plus end conferring a structural polarity. Microtubules usually have 13 protofilaments but different protofilament numbers can be found in some organisms and specialized cells.</text>
</comment>
<comment type="subcellular location">
    <subcellularLocation>
        <location>Cytoplasm</location>
        <location>Cytoskeleton</location>
    </subcellularLocation>
</comment>
<comment type="domain">
    <text evidence="2">The MREC motif may be critical for tubulin autoregulation.</text>
</comment>
<comment type="PTM">
    <text evidence="4">Some glutamate residues at the C-terminus are polyglycylated, resulting in polyglycine chains on the gamma-carboxyl group. Glycylation is mainly limited to tubulin incorporated into axonemes (cilia and flagella) whereas glutamylation is prevalent in neuronal cells, centrioles, axonemes, and the mitotic spindle. Both modifications can coexist on the same protein on adjacent residues, and lowering polyglycylation levels increases polyglutamylation, and reciprocally. Cilia and flagella glycylation is required for their stability and maintenance. Flagella glycylation controls sperm motility.</text>
</comment>
<comment type="PTM">
    <text evidence="4 5">Some glutamate residues at the C-terminus are polyglutamylated, resulting in polyglutamate chains on the gamma-carboxyl group (By similarity). Polyglutamylation plays a key role in microtubule severing by spastin (SPAST). SPAST preferentially recognizes and acts on microtubules decorated with short polyglutamate tails: severing activity by SPAST increases as the number of glutamates per tubulin rises from one to eight, but decreases beyond this glutamylation threshold (By similarity). Glutamylation is also involved in cilia motility (By similarity).</text>
</comment>
<comment type="PTM">
    <text evidence="5">Acetylation of alpha chains at Lys-40 is located inside the microtubule lumen. This modification has been correlated with increased microtubule stability, intracellular transport and ciliary assembly.</text>
</comment>
<comment type="PTM">
    <text evidence="2">Methylation of alpha chains at Lys-40 is found in mitotic microtubules and is required for normal mitosis and cytokinesis contributing to genomic stability.</text>
</comment>
<comment type="PTM">
    <text evidence="5">Nitration of Tyr-449 is irreversible and interferes with normal dynein intracellular distribution.</text>
</comment>
<comment type="PTM">
    <text evidence="7">Undergoes a tyrosination/detyrosination cycle, the cyclic removal and re-addition of a C-terminal tyrosine residue by the enzymes tubulin tyrosine carboxypeptidase (MATCAP1, VASH1 or VASH2) and tubulin tyrosine ligase (TTL), respectively.</text>
</comment>
<comment type="PTM">
    <molecule>Tubulin alpha-1C chain</molecule>
    <text evidence="3 5">Tyrosination promotes microtubule interaction with CAP-Gly domain-containing proteins such as CLIP1, CLIP2 and DCTN1 (By similarity). Tyrosination regulates the initiation of dynein-dynactin motility via interaction with DCTN1, which brings the dynein-dynactin complex into contact with microtubules. In neurons, tyrosinated tubulins mediate the initiation of retrograde vesicle transport (By similarity).</text>
</comment>
<comment type="PTM">
    <molecule>Detyrosinated tubulin alpha-1C chain</molecule>
    <text evidence="4 6">Detyrosination is involved in metaphase plate congression by guiding chromosomes during mitosis: detyrosination promotes interaction with CENPE, promoting pole-proximal transport of chromosomes toward the equator (By similarity). Detyrosination increases microtubules-dependent mechanotransduction in dystrophic cardiac and skeletal muscle. In cardiomyocytes, detyrosinated microtubules are required to resist to contractile compression during contraction: detyrosination promotes association with desmin (DES) at force-generating sarcomeres, leading to buckled microtubules and mechanical resistance to contraction (By similarity).</text>
</comment>
<comment type="similarity">
    <text evidence="8">Belongs to the tubulin family.</text>
</comment>
<protein>
    <recommendedName>
        <fullName>Tubulin alpha-1C chain</fullName>
        <ecNumber evidence="2">3.6.5.-</ecNumber>
    </recommendedName>
    <alternativeName>
        <fullName>Alpha-tubulin 6</fullName>
    </alternativeName>
    <alternativeName>
        <fullName>Tubulin alpha-6 chain</fullName>
    </alternativeName>
    <component>
        <recommendedName>
            <fullName>Detyrosinated tubulin alpha-1C chain</fullName>
        </recommendedName>
    </component>
</protein>
<evidence type="ECO:0000250" key="1"/>
<evidence type="ECO:0000250" key="2">
    <source>
        <dbReference type="UniProtKB" id="P68363"/>
    </source>
</evidence>
<evidence type="ECO:0000250" key="3">
    <source>
        <dbReference type="UniProtKB" id="P68369"/>
    </source>
</evidence>
<evidence type="ECO:0000250" key="4">
    <source>
        <dbReference type="UniProtKB" id="P68373"/>
    </source>
</evidence>
<evidence type="ECO:0000250" key="5">
    <source>
        <dbReference type="UniProtKB" id="Q71U36"/>
    </source>
</evidence>
<evidence type="ECO:0000250" key="6">
    <source>
        <dbReference type="UniProtKB" id="Q9BQE3"/>
    </source>
</evidence>
<evidence type="ECO:0000269" key="7">
    <source>
    </source>
</evidence>
<evidence type="ECO:0000305" key="8"/>
<reference key="1">
    <citation type="journal article" date="2004" name="Genome Res.">
        <title>The status, quality, and expansion of the NIH full-length cDNA project: the Mammalian Gene Collection (MGC).</title>
        <authorList>
            <consortium name="The MGC Project Team"/>
        </authorList>
    </citation>
    <scope>NUCLEOTIDE SEQUENCE [LARGE SCALE MRNA]</scope>
    <source>
        <tissue>Testis</tissue>
    </source>
</reference>
<reference key="2">
    <citation type="submission" date="2006-12" db="UniProtKB">
        <authorList>
            <person name="Lubec G."/>
            <person name="Afjehi-Sadat L."/>
        </authorList>
    </citation>
    <scope>PROTEIN SEQUENCE OF 41-60; 65-79; 85-105; 113-121 AND 216-280</scope>
    <scope>IDENTIFICATION BY MASS SPECTROMETRY</scope>
    <source>
        <strain>Sprague-Dawley</strain>
        <tissue>Spinal cord</tissue>
    </source>
</reference>
<reference key="3">
    <citation type="journal article" date="1997" name="Dev. Growth Differ.">
        <title>Tubulin tyrosine ligase: protein and mRNA expression in developing rat skeletal muscle.</title>
        <authorList>
            <person name="Arregui C.O."/>
            <person name="Mas C.R."/>
            <person name="Argarana C.E."/>
            <person name="Barra H.S."/>
        </authorList>
    </citation>
    <scope>TYROSINATION</scope>
</reference>
<keyword id="KW-0007">Acetylation</keyword>
<keyword id="KW-0963">Cytoplasm</keyword>
<keyword id="KW-0206">Cytoskeleton</keyword>
<keyword id="KW-0903">Direct protein sequencing</keyword>
<keyword id="KW-0342">GTP-binding</keyword>
<keyword id="KW-0378">Hydrolase</keyword>
<keyword id="KW-0460">Magnesium</keyword>
<keyword id="KW-0479">Metal-binding</keyword>
<keyword id="KW-0488">Methylation</keyword>
<keyword id="KW-0493">Microtubule</keyword>
<keyword id="KW-0944">Nitration</keyword>
<keyword id="KW-0547">Nucleotide-binding</keyword>
<keyword id="KW-0597">Phosphoprotein</keyword>
<keyword id="KW-1185">Reference proteome</keyword>
<name>TBA1C_RAT</name>
<proteinExistence type="evidence at protein level"/>
<feature type="chain" id="PRO_0000048129" description="Tubulin alpha-1C chain">
    <location>
        <begin position="1"/>
        <end position="449"/>
    </location>
</feature>
<feature type="chain" id="PRO_0000437396" description="Detyrosinated tubulin alpha-1C chain" evidence="6">
    <location>
        <begin position="1"/>
        <end position="448"/>
    </location>
</feature>
<feature type="short sequence motif" description="MREC motif" evidence="2">
    <location>
        <begin position="1"/>
        <end position="4"/>
    </location>
</feature>
<feature type="active site" evidence="2">
    <location>
        <position position="254"/>
    </location>
</feature>
<feature type="binding site" evidence="2">
    <location>
        <position position="11"/>
    </location>
    <ligand>
        <name>GTP</name>
        <dbReference type="ChEBI" id="CHEBI:37565"/>
    </ligand>
</feature>
<feature type="binding site" evidence="2">
    <location>
        <position position="71"/>
    </location>
    <ligand>
        <name>GTP</name>
        <dbReference type="ChEBI" id="CHEBI:37565"/>
    </ligand>
</feature>
<feature type="binding site" evidence="2">
    <location>
        <position position="71"/>
    </location>
    <ligand>
        <name>Mg(2+)</name>
        <dbReference type="ChEBI" id="CHEBI:18420"/>
    </ligand>
</feature>
<feature type="binding site" evidence="2">
    <location>
        <position position="140"/>
    </location>
    <ligand>
        <name>GTP</name>
        <dbReference type="ChEBI" id="CHEBI:37565"/>
    </ligand>
</feature>
<feature type="binding site" evidence="2">
    <location>
        <position position="144"/>
    </location>
    <ligand>
        <name>GTP</name>
        <dbReference type="ChEBI" id="CHEBI:37565"/>
    </ligand>
</feature>
<feature type="binding site" evidence="2">
    <location>
        <position position="145"/>
    </location>
    <ligand>
        <name>GTP</name>
        <dbReference type="ChEBI" id="CHEBI:37565"/>
    </ligand>
</feature>
<feature type="binding site" evidence="2">
    <location>
        <position position="179"/>
    </location>
    <ligand>
        <name>GTP</name>
        <dbReference type="ChEBI" id="CHEBI:37565"/>
    </ligand>
</feature>
<feature type="binding site" evidence="2">
    <location>
        <position position="206"/>
    </location>
    <ligand>
        <name>GTP</name>
        <dbReference type="ChEBI" id="CHEBI:37565"/>
    </ligand>
</feature>
<feature type="binding site" evidence="2">
    <location>
        <position position="228"/>
    </location>
    <ligand>
        <name>GTP</name>
        <dbReference type="ChEBI" id="CHEBI:37565"/>
    </ligand>
</feature>
<feature type="site" description="Involved in polymerization" evidence="1">
    <location>
        <position position="449"/>
    </location>
</feature>
<feature type="modified residue" description="N6-acetyllysine" evidence="6">
    <location>
        <position position="40"/>
    </location>
</feature>
<feature type="modified residue" description="3'-nitrotyrosine" evidence="4">
    <location>
        <position position="282"/>
    </location>
</feature>
<feature type="modified residue" description="Phosphotyrosine" evidence="6">
    <location>
        <position position="432"/>
    </location>
</feature>
<feature type="modified residue" description="Phosphoserine" evidence="6">
    <location>
        <position position="439"/>
    </location>
</feature>
<feature type="modified residue" description="3'-nitrotyrosine" evidence="5">
    <location>
        <position position="449"/>
    </location>
</feature>
<organism>
    <name type="scientific">Rattus norvegicus</name>
    <name type="common">Rat</name>
    <dbReference type="NCBI Taxonomy" id="10116"/>
    <lineage>
        <taxon>Eukaryota</taxon>
        <taxon>Metazoa</taxon>
        <taxon>Chordata</taxon>
        <taxon>Craniata</taxon>
        <taxon>Vertebrata</taxon>
        <taxon>Euteleostomi</taxon>
        <taxon>Mammalia</taxon>
        <taxon>Eutheria</taxon>
        <taxon>Euarchontoglires</taxon>
        <taxon>Glires</taxon>
        <taxon>Rodentia</taxon>
        <taxon>Myomorpha</taxon>
        <taxon>Muroidea</taxon>
        <taxon>Muridae</taxon>
        <taxon>Murinae</taxon>
        <taxon>Rattus</taxon>
    </lineage>
</organism>
<accession>Q6AYZ1</accession>